<evidence type="ECO:0000255" key="1">
    <source>
        <dbReference type="HAMAP-Rule" id="MF_01039"/>
    </source>
</evidence>
<dbReference type="EC" id="5.4.2.11" evidence="1"/>
<dbReference type="EMBL" id="BA000021">
    <property type="protein sequence ID" value="BAC24364.1"/>
    <property type="molecule type" value="Genomic_DNA"/>
</dbReference>
<dbReference type="SMR" id="Q8D2Y4"/>
<dbReference type="STRING" id="36870.gene:10368706"/>
<dbReference type="KEGG" id="wbr:gpmA"/>
<dbReference type="eggNOG" id="COG0588">
    <property type="taxonomic scope" value="Bacteria"/>
</dbReference>
<dbReference type="HOGENOM" id="CLU_033323_1_1_6"/>
<dbReference type="OrthoDB" id="9781415at2"/>
<dbReference type="UniPathway" id="UPA00109">
    <property type="reaction ID" value="UER00186"/>
</dbReference>
<dbReference type="Proteomes" id="UP000000562">
    <property type="component" value="Chromosome"/>
</dbReference>
<dbReference type="GO" id="GO:0004619">
    <property type="term" value="F:phosphoglycerate mutase activity"/>
    <property type="evidence" value="ECO:0007669"/>
    <property type="project" value="UniProtKB-EC"/>
</dbReference>
<dbReference type="GO" id="GO:0006094">
    <property type="term" value="P:gluconeogenesis"/>
    <property type="evidence" value="ECO:0007669"/>
    <property type="project" value="UniProtKB-UniRule"/>
</dbReference>
<dbReference type="GO" id="GO:0006096">
    <property type="term" value="P:glycolytic process"/>
    <property type="evidence" value="ECO:0007669"/>
    <property type="project" value="UniProtKB-UniRule"/>
</dbReference>
<dbReference type="CDD" id="cd07067">
    <property type="entry name" value="HP_PGM_like"/>
    <property type="match status" value="1"/>
</dbReference>
<dbReference type="FunFam" id="3.40.50.1240:FF:000003">
    <property type="entry name" value="2,3-bisphosphoglycerate-dependent phosphoglycerate mutase"/>
    <property type="match status" value="1"/>
</dbReference>
<dbReference type="Gene3D" id="3.40.50.1240">
    <property type="entry name" value="Phosphoglycerate mutase-like"/>
    <property type="match status" value="1"/>
</dbReference>
<dbReference type="HAMAP" id="MF_01039">
    <property type="entry name" value="PGAM_GpmA"/>
    <property type="match status" value="1"/>
</dbReference>
<dbReference type="InterPro" id="IPR013078">
    <property type="entry name" value="His_Pase_superF_clade-1"/>
</dbReference>
<dbReference type="InterPro" id="IPR029033">
    <property type="entry name" value="His_PPase_superfam"/>
</dbReference>
<dbReference type="InterPro" id="IPR005952">
    <property type="entry name" value="Phosphogly_mut1"/>
</dbReference>
<dbReference type="NCBIfam" id="TIGR01258">
    <property type="entry name" value="pgm_1"/>
    <property type="match status" value="1"/>
</dbReference>
<dbReference type="NCBIfam" id="NF010713">
    <property type="entry name" value="PRK14115.1"/>
    <property type="match status" value="1"/>
</dbReference>
<dbReference type="PANTHER" id="PTHR11931">
    <property type="entry name" value="PHOSPHOGLYCERATE MUTASE"/>
    <property type="match status" value="1"/>
</dbReference>
<dbReference type="Pfam" id="PF00300">
    <property type="entry name" value="His_Phos_1"/>
    <property type="match status" value="1"/>
</dbReference>
<dbReference type="PIRSF" id="PIRSF000709">
    <property type="entry name" value="6PFK_2-Ptase"/>
    <property type="match status" value="1"/>
</dbReference>
<dbReference type="SMART" id="SM00855">
    <property type="entry name" value="PGAM"/>
    <property type="match status" value="1"/>
</dbReference>
<dbReference type="SUPFAM" id="SSF53254">
    <property type="entry name" value="Phosphoglycerate mutase-like"/>
    <property type="match status" value="1"/>
</dbReference>
<comment type="function">
    <text evidence="1">Catalyzes the interconversion of 2-phosphoglycerate and 3-phosphoglycerate.</text>
</comment>
<comment type="catalytic activity">
    <reaction evidence="1">
        <text>(2R)-2-phosphoglycerate = (2R)-3-phosphoglycerate</text>
        <dbReference type="Rhea" id="RHEA:15901"/>
        <dbReference type="ChEBI" id="CHEBI:58272"/>
        <dbReference type="ChEBI" id="CHEBI:58289"/>
        <dbReference type="EC" id="5.4.2.11"/>
    </reaction>
</comment>
<comment type="pathway">
    <text evidence="1">Carbohydrate degradation; glycolysis; pyruvate from D-glyceraldehyde 3-phosphate: step 3/5.</text>
</comment>
<comment type="subunit">
    <text evidence="1">Homodimer.</text>
</comment>
<comment type="similarity">
    <text evidence="1">Belongs to the phosphoglycerate mutase family. BPG-dependent PGAM subfamily.</text>
</comment>
<feature type="chain" id="PRO_0000179937" description="2,3-bisphosphoglycerate-dependent phosphoglycerate mutase">
    <location>
        <begin position="1"/>
        <end position="234"/>
    </location>
</feature>
<feature type="active site" description="Tele-phosphohistidine intermediate" evidence="1">
    <location>
        <position position="11"/>
    </location>
</feature>
<feature type="active site" description="Proton donor/acceptor" evidence="1">
    <location>
        <position position="89"/>
    </location>
</feature>
<feature type="binding site" evidence="1">
    <location>
        <begin position="10"/>
        <end position="17"/>
    </location>
    <ligand>
        <name>substrate</name>
    </ligand>
</feature>
<feature type="binding site" evidence="1">
    <location>
        <begin position="23"/>
        <end position="24"/>
    </location>
    <ligand>
        <name>substrate</name>
    </ligand>
</feature>
<feature type="binding site" evidence="1">
    <location>
        <position position="62"/>
    </location>
    <ligand>
        <name>substrate</name>
    </ligand>
</feature>
<feature type="binding site" evidence="1">
    <location>
        <begin position="89"/>
        <end position="92"/>
    </location>
    <ligand>
        <name>substrate</name>
    </ligand>
</feature>
<feature type="binding site" evidence="1">
    <location>
        <position position="100"/>
    </location>
    <ligand>
        <name>substrate</name>
    </ligand>
</feature>
<feature type="binding site" evidence="1">
    <location>
        <begin position="116"/>
        <end position="117"/>
    </location>
    <ligand>
        <name>substrate</name>
    </ligand>
</feature>
<feature type="binding site" evidence="1">
    <location>
        <begin position="186"/>
        <end position="187"/>
    </location>
    <ligand>
        <name>substrate</name>
    </ligand>
</feature>
<feature type="site" description="Transition state stabilizer" evidence="1">
    <location>
        <position position="185"/>
    </location>
</feature>
<organism>
    <name type="scientific">Wigglesworthia glossinidia brevipalpis</name>
    <dbReference type="NCBI Taxonomy" id="36870"/>
    <lineage>
        <taxon>Bacteria</taxon>
        <taxon>Pseudomonadati</taxon>
        <taxon>Pseudomonadota</taxon>
        <taxon>Gammaproteobacteria</taxon>
        <taxon>Enterobacterales</taxon>
        <taxon>Erwiniaceae</taxon>
        <taxon>Wigglesworthia</taxon>
    </lineage>
</organism>
<accession>Q8D2Y4</accession>
<gene>
    <name evidence="1" type="primary">gpmA</name>
    <name type="ordered locus">WIGBR2180</name>
</gene>
<reference key="1">
    <citation type="journal article" date="2002" name="Nat. Genet.">
        <title>Genome sequence of the endocellular obligate symbiont of tsetse flies, Wigglesworthia glossinidia.</title>
        <authorList>
            <person name="Akman L."/>
            <person name="Yamashita A."/>
            <person name="Watanabe H."/>
            <person name="Oshima K."/>
            <person name="Shiba T."/>
            <person name="Hattori M."/>
            <person name="Aksoy S."/>
        </authorList>
    </citation>
    <scope>NUCLEOTIDE SEQUENCE [LARGE SCALE GENOMIC DNA]</scope>
</reference>
<sequence>MSIIKLVLMRHGSSIWNDQDRFTGWTDIDLSEKGKNEVKYAGKMLKSFGYSFNFAYTSLLKRAIHSLWVILKEINQSWIPVEKSWRLNERHYGALQGFSKYEIEKKYGKNQLNEWRRGFSISPPKINEKDNYFILNDKRYLNLKTKKLLPFSESLKSTIDRIMPYWDGNIFPRLQNKEKIIIVAHGNSIRAIIKILCNLNEKEIIKINIPTGIPLIYEFDYNMVFKKKYFLFDR</sequence>
<proteinExistence type="inferred from homology"/>
<keyword id="KW-0312">Gluconeogenesis</keyword>
<keyword id="KW-0324">Glycolysis</keyword>
<keyword id="KW-0413">Isomerase</keyword>
<keyword id="KW-1185">Reference proteome</keyword>
<protein>
    <recommendedName>
        <fullName evidence="1">2,3-bisphosphoglycerate-dependent phosphoglycerate mutase</fullName>
        <shortName evidence="1">BPG-dependent PGAM</shortName>
        <shortName evidence="1">PGAM</shortName>
        <shortName evidence="1">Phosphoglyceromutase</shortName>
        <shortName evidence="1">dPGM</shortName>
        <ecNumber evidence="1">5.4.2.11</ecNumber>
    </recommendedName>
</protein>
<name>GPMA_WIGBR</name>